<sequence>MASENMTPQDYIGHHLNNLQLDLRTFSLVDPQNPPATFWTINIDSMFFSVVLGLLFLVLFRSVAKKATSGVPGKFQTAIELVIGFVNGSVKDMYHGKSKLIAPLALTIFVWVFLMNLMDLLPIDLLPYIAEHVLGLPALRVVPSADVNVTLSMALGVFILILFYSIKMKGIGGFTKELTLQPFNHWAFIPVNLILEGVSLLSKPVSLGLRLFGNMYAGELIFILIAGLLPWWSQWILNVPWAIFHILIITLQAFIFMVLTIVYLSMASEEH</sequence>
<gene>
    <name evidence="1" type="primary">atpB</name>
    <name type="ordered locus">SbBS512_E4183</name>
</gene>
<evidence type="ECO:0000255" key="1">
    <source>
        <dbReference type="HAMAP-Rule" id="MF_01393"/>
    </source>
</evidence>
<name>ATP6_SHIB3</name>
<protein>
    <recommendedName>
        <fullName evidence="1">ATP synthase subunit a</fullName>
    </recommendedName>
    <alternativeName>
        <fullName evidence="1">ATP synthase F0 sector subunit a</fullName>
    </alternativeName>
    <alternativeName>
        <fullName evidence="1">F-ATPase subunit 6</fullName>
    </alternativeName>
</protein>
<accession>B2TUN7</accession>
<dbReference type="EMBL" id="CP001063">
    <property type="protein sequence ID" value="ACD09963.1"/>
    <property type="molecule type" value="Genomic_DNA"/>
</dbReference>
<dbReference type="RefSeq" id="WP_000135625.1">
    <property type="nucleotide sequence ID" value="NC_010658.1"/>
</dbReference>
<dbReference type="SMR" id="B2TUN7"/>
<dbReference type="STRING" id="344609.SbBS512_E4183"/>
<dbReference type="GeneID" id="93778229"/>
<dbReference type="KEGG" id="sbc:SbBS512_E4183"/>
<dbReference type="HOGENOM" id="CLU_041018_1_0_6"/>
<dbReference type="Proteomes" id="UP000001030">
    <property type="component" value="Chromosome"/>
</dbReference>
<dbReference type="GO" id="GO:0005886">
    <property type="term" value="C:plasma membrane"/>
    <property type="evidence" value="ECO:0007669"/>
    <property type="project" value="UniProtKB-SubCell"/>
</dbReference>
<dbReference type="GO" id="GO:0045259">
    <property type="term" value="C:proton-transporting ATP synthase complex"/>
    <property type="evidence" value="ECO:0007669"/>
    <property type="project" value="UniProtKB-KW"/>
</dbReference>
<dbReference type="GO" id="GO:0046933">
    <property type="term" value="F:proton-transporting ATP synthase activity, rotational mechanism"/>
    <property type="evidence" value="ECO:0007669"/>
    <property type="project" value="UniProtKB-UniRule"/>
</dbReference>
<dbReference type="GO" id="GO:0042777">
    <property type="term" value="P:proton motive force-driven plasma membrane ATP synthesis"/>
    <property type="evidence" value="ECO:0007669"/>
    <property type="project" value="TreeGrafter"/>
</dbReference>
<dbReference type="CDD" id="cd00310">
    <property type="entry name" value="ATP-synt_Fo_a_6"/>
    <property type="match status" value="1"/>
</dbReference>
<dbReference type="FunFam" id="1.20.120.220:FF:000002">
    <property type="entry name" value="ATP synthase subunit a"/>
    <property type="match status" value="1"/>
</dbReference>
<dbReference type="Gene3D" id="1.20.120.220">
    <property type="entry name" value="ATP synthase, F0 complex, subunit A"/>
    <property type="match status" value="1"/>
</dbReference>
<dbReference type="HAMAP" id="MF_01393">
    <property type="entry name" value="ATP_synth_a_bact"/>
    <property type="match status" value="1"/>
</dbReference>
<dbReference type="InterPro" id="IPR045082">
    <property type="entry name" value="ATP_syn_F0_a_bact/chloroplast"/>
</dbReference>
<dbReference type="InterPro" id="IPR000568">
    <property type="entry name" value="ATP_synth_F0_asu"/>
</dbReference>
<dbReference type="InterPro" id="IPR023011">
    <property type="entry name" value="ATP_synth_F0_asu_AS"/>
</dbReference>
<dbReference type="InterPro" id="IPR035908">
    <property type="entry name" value="F0_ATP_A_sf"/>
</dbReference>
<dbReference type="NCBIfam" id="TIGR01131">
    <property type="entry name" value="ATP_synt_6_or_A"/>
    <property type="match status" value="1"/>
</dbReference>
<dbReference type="NCBIfam" id="NF004477">
    <property type="entry name" value="PRK05815.1-1"/>
    <property type="match status" value="1"/>
</dbReference>
<dbReference type="PANTHER" id="PTHR42823">
    <property type="entry name" value="ATP SYNTHASE SUBUNIT A, CHLOROPLASTIC"/>
    <property type="match status" value="1"/>
</dbReference>
<dbReference type="PANTHER" id="PTHR42823:SF3">
    <property type="entry name" value="ATP SYNTHASE SUBUNIT A, CHLOROPLASTIC"/>
    <property type="match status" value="1"/>
</dbReference>
<dbReference type="Pfam" id="PF00119">
    <property type="entry name" value="ATP-synt_A"/>
    <property type="match status" value="1"/>
</dbReference>
<dbReference type="PRINTS" id="PR00123">
    <property type="entry name" value="ATPASEA"/>
</dbReference>
<dbReference type="SUPFAM" id="SSF81336">
    <property type="entry name" value="F1F0 ATP synthase subunit A"/>
    <property type="match status" value="1"/>
</dbReference>
<dbReference type="PROSITE" id="PS00449">
    <property type="entry name" value="ATPASE_A"/>
    <property type="match status" value="1"/>
</dbReference>
<organism>
    <name type="scientific">Shigella boydii serotype 18 (strain CDC 3083-94 / BS512)</name>
    <dbReference type="NCBI Taxonomy" id="344609"/>
    <lineage>
        <taxon>Bacteria</taxon>
        <taxon>Pseudomonadati</taxon>
        <taxon>Pseudomonadota</taxon>
        <taxon>Gammaproteobacteria</taxon>
        <taxon>Enterobacterales</taxon>
        <taxon>Enterobacteriaceae</taxon>
        <taxon>Shigella</taxon>
    </lineage>
</organism>
<reference key="1">
    <citation type="submission" date="2008-05" db="EMBL/GenBank/DDBJ databases">
        <title>Complete sequence of Shigella boydii serotype 18 strain BS512.</title>
        <authorList>
            <person name="Rasko D.A."/>
            <person name="Rosovitz M."/>
            <person name="Maurelli A.T."/>
            <person name="Myers G."/>
            <person name="Seshadri R."/>
            <person name="Cer R."/>
            <person name="Jiang L."/>
            <person name="Ravel J."/>
            <person name="Sebastian Y."/>
        </authorList>
    </citation>
    <scope>NUCLEOTIDE SEQUENCE [LARGE SCALE GENOMIC DNA]</scope>
    <source>
        <strain>CDC 3083-94 / BS512</strain>
    </source>
</reference>
<feature type="chain" id="PRO_0000362464" description="ATP synthase subunit a">
    <location>
        <begin position="1"/>
        <end position="271"/>
    </location>
</feature>
<feature type="transmembrane region" description="Helical" evidence="1">
    <location>
        <begin position="40"/>
        <end position="60"/>
    </location>
</feature>
<feature type="transmembrane region" description="Helical" evidence="1">
    <location>
        <begin position="100"/>
        <end position="120"/>
    </location>
</feature>
<feature type="transmembrane region" description="Helical" evidence="1">
    <location>
        <begin position="146"/>
        <end position="166"/>
    </location>
</feature>
<feature type="transmembrane region" description="Helical" evidence="1">
    <location>
        <begin position="220"/>
        <end position="240"/>
    </location>
</feature>
<feature type="transmembrane region" description="Helical" evidence="1">
    <location>
        <begin position="242"/>
        <end position="262"/>
    </location>
</feature>
<comment type="function">
    <text evidence="1">Key component of the proton channel; it plays a direct role in the translocation of protons across the membrane.</text>
</comment>
<comment type="subunit">
    <text evidence="1">F-type ATPases have 2 components, CF(1) - the catalytic core - and CF(0) - the membrane proton channel. CF(1) has five subunits: alpha(3), beta(3), gamma(1), delta(1), epsilon(1). CF(0) has three main subunits: a(1), b(2) and c(9-12). The alpha and beta chains form an alternating ring which encloses part of the gamma chain. CF(1) is attached to CF(0) by a central stalk formed by the gamma and epsilon chains, while a peripheral stalk is formed by the delta and b chains.</text>
</comment>
<comment type="subcellular location">
    <subcellularLocation>
        <location evidence="1">Cell inner membrane</location>
        <topology evidence="1">Multi-pass membrane protein</topology>
    </subcellularLocation>
</comment>
<comment type="similarity">
    <text evidence="1">Belongs to the ATPase A chain family.</text>
</comment>
<proteinExistence type="inferred from homology"/>
<keyword id="KW-0066">ATP synthesis</keyword>
<keyword id="KW-0997">Cell inner membrane</keyword>
<keyword id="KW-1003">Cell membrane</keyword>
<keyword id="KW-0138">CF(0)</keyword>
<keyword id="KW-0375">Hydrogen ion transport</keyword>
<keyword id="KW-0406">Ion transport</keyword>
<keyword id="KW-0472">Membrane</keyword>
<keyword id="KW-1185">Reference proteome</keyword>
<keyword id="KW-0812">Transmembrane</keyword>
<keyword id="KW-1133">Transmembrane helix</keyword>
<keyword id="KW-0813">Transport</keyword>